<evidence type="ECO:0000250" key="1">
    <source>
        <dbReference type="UniProtKB" id="Q9NYP7"/>
    </source>
</evidence>
<evidence type="ECO:0000255" key="2">
    <source>
        <dbReference type="HAMAP-Rule" id="MF_03205"/>
    </source>
</evidence>
<evidence type="ECO:0000256" key="3">
    <source>
        <dbReference type="SAM" id="MobiDB-lite"/>
    </source>
</evidence>
<evidence type="ECO:0000269" key="4">
    <source>
    </source>
</evidence>
<evidence type="ECO:0000305" key="5"/>
<sequence length="299" mass="35332">MEHFDASLSTYFKAFLGPRDTRVKGWFLLDNYIPTFVCSVIYLLIVWLGPKYMKNRQPFSCRGILQLYNLGLTLLSLYMFYELVTGVWEGKYNFFCQGTRSAGESDMKIIRVLWWYYFSKLIEFMDTFFFILRKNNHQITVLHVYHHATMLNIWWFVMNWVPCGHSYFGATLNSFIHVLMYSYYGLSSIPSMRPYLWWKKYITQGQLVQFVLTIIQTTCGVFWPCSFPLGWLFFQIGYMISLIALFTNFYIQTYNKKGASRRKDHLKGHQNGSVAAVNGHTNSFPSLENSVKPRKQRKD</sequence>
<accession>Q8BHI7</accession>
<accession>Q8BLG6</accession>
<accession>Q8BUE3</accession>
<accession>Q8R5D3</accession>
<keyword id="KW-0007">Acetylation</keyword>
<keyword id="KW-0966">Cell projection</keyword>
<keyword id="KW-0256">Endoplasmic reticulum</keyword>
<keyword id="KW-0275">Fatty acid biosynthesis</keyword>
<keyword id="KW-0276">Fatty acid metabolism</keyword>
<keyword id="KW-0444">Lipid biosynthesis</keyword>
<keyword id="KW-0443">Lipid metabolism</keyword>
<keyword id="KW-0472">Membrane</keyword>
<keyword id="KW-1185">Reference proteome</keyword>
<keyword id="KW-0808">Transferase</keyword>
<keyword id="KW-0812">Transmembrane</keyword>
<keyword id="KW-1133">Transmembrane helix</keyword>
<feature type="chain" id="PRO_0000282840" description="Very long chain fatty acid elongase 5">
    <location>
        <begin position="1"/>
        <end position="299"/>
    </location>
</feature>
<feature type="transmembrane region" description="Helical" evidence="2">
    <location>
        <begin position="26"/>
        <end position="46"/>
    </location>
</feature>
<feature type="transmembrane region" description="Helical" evidence="2">
    <location>
        <begin position="64"/>
        <end position="84"/>
    </location>
</feature>
<feature type="transmembrane region" description="Helical" evidence="2">
    <location>
        <begin position="112"/>
        <end position="132"/>
    </location>
</feature>
<feature type="transmembrane region" description="Helical" evidence="2">
    <location>
        <begin position="139"/>
        <end position="158"/>
    </location>
</feature>
<feature type="transmembrane region" description="Helical" evidence="2">
    <location>
        <begin position="168"/>
        <end position="187"/>
    </location>
</feature>
<feature type="transmembrane region" description="Helical" evidence="2">
    <location>
        <begin position="205"/>
        <end position="225"/>
    </location>
</feature>
<feature type="transmembrane region" description="Helical" evidence="2">
    <location>
        <begin position="227"/>
        <end position="247"/>
    </location>
</feature>
<feature type="region of interest" description="Disordered" evidence="3">
    <location>
        <begin position="274"/>
        <end position="299"/>
    </location>
</feature>
<feature type="compositionally biased region" description="Polar residues" evidence="3">
    <location>
        <begin position="279"/>
        <end position="289"/>
    </location>
</feature>
<feature type="modified residue" description="N-acetylmethionine" evidence="1">
    <location>
        <position position="1"/>
    </location>
</feature>
<feature type="sequence conflict" description="In Ref. 1; BAC32290." evidence="5" ref="1">
    <original>F</original>
    <variation>L</variation>
    <location>
        <position position="36"/>
    </location>
</feature>
<feature type="sequence conflict" description="In Ref. 1; BAC39499." evidence="5" ref="1">
    <original>C</original>
    <variation>W</variation>
    <location>
        <position position="163"/>
    </location>
</feature>
<feature type="sequence conflict" description="In Ref. 1; BAC40176 and 2; AAH22911." evidence="5" ref="1 2">
    <original>D</original>
    <variation>E</variation>
    <location>
        <position position="264"/>
    </location>
</feature>
<gene>
    <name evidence="2" type="primary">Elovl5</name>
</gene>
<proteinExistence type="evidence at protein level"/>
<name>ELOV5_MOUSE</name>
<comment type="function">
    <text evidence="2 4">Catalyzes the first and rate-limiting reaction of the four reactions that constitute the long-chain fatty acids elongation cycle. This endoplasmic reticulum-bound enzymatic process allows the addition of 2 carbons to the chain of long- and very long-chain fatty acids (VLCFAs) per cycle. Condensing enzyme that acts specifically toward polyunsaturated acyl-CoA with the higher activity toward C18:3(n-6) acyl-CoA. May participate in the production of monounsaturated and of polyunsaturated VLCFAs of different chain lengths that are involved in multiple biological processes as precursors of membrane lipids and lipid mediators (By similarity). In conditions where the essential linoleic and alpha linoleic fatty acids are lacking it is also involved in the synthesis of Mead acid from oleic acid (PubMed:24184513).</text>
</comment>
<comment type="catalytic activity">
    <reaction evidence="2 4">
        <text>a very-long-chain acyl-CoA + malonyl-CoA + H(+) = a very-long-chain 3-oxoacyl-CoA + CO2 + CoA</text>
        <dbReference type="Rhea" id="RHEA:32727"/>
        <dbReference type="ChEBI" id="CHEBI:15378"/>
        <dbReference type="ChEBI" id="CHEBI:16526"/>
        <dbReference type="ChEBI" id="CHEBI:57287"/>
        <dbReference type="ChEBI" id="CHEBI:57384"/>
        <dbReference type="ChEBI" id="CHEBI:90725"/>
        <dbReference type="ChEBI" id="CHEBI:90736"/>
        <dbReference type="EC" id="2.3.1.199"/>
    </reaction>
    <physiologicalReaction direction="left-to-right" evidence="4">
        <dbReference type="Rhea" id="RHEA:32728"/>
    </physiologicalReaction>
</comment>
<comment type="catalytic activity">
    <reaction evidence="1">
        <text>(6Z,9Z,12Z)-octadecatrienoyl-CoA + malonyl-CoA + H(+) = (8Z,11Z,14Z)-3-oxoeicosatrienoyl-CoA + CO2 + CoA</text>
        <dbReference type="Rhea" id="RHEA:35379"/>
        <dbReference type="ChEBI" id="CHEBI:15378"/>
        <dbReference type="ChEBI" id="CHEBI:16526"/>
        <dbReference type="ChEBI" id="CHEBI:57287"/>
        <dbReference type="ChEBI" id="CHEBI:57363"/>
        <dbReference type="ChEBI" id="CHEBI:57384"/>
        <dbReference type="ChEBI" id="CHEBI:71481"/>
    </reaction>
    <physiologicalReaction direction="left-to-right" evidence="1">
        <dbReference type="Rhea" id="RHEA:35380"/>
    </physiologicalReaction>
</comment>
<comment type="catalytic activity">
    <reaction evidence="1">
        <text>(9Z,12Z,15Z)-octadecatrienoyl-CoA + malonyl-CoA + H(+) = (11Z,14Z,17Z)-3-oxoeicosatrienoyl-CoA + CO2 + CoA</text>
        <dbReference type="Rhea" id="RHEA:36523"/>
        <dbReference type="ChEBI" id="CHEBI:15378"/>
        <dbReference type="ChEBI" id="CHEBI:16526"/>
        <dbReference type="ChEBI" id="CHEBI:57287"/>
        <dbReference type="ChEBI" id="CHEBI:57384"/>
        <dbReference type="ChEBI" id="CHEBI:74034"/>
        <dbReference type="ChEBI" id="CHEBI:74054"/>
    </reaction>
    <physiologicalReaction direction="left-to-right" evidence="1">
        <dbReference type="Rhea" id="RHEA:36524"/>
    </physiologicalReaction>
</comment>
<comment type="catalytic activity">
    <reaction evidence="1">
        <text>(9Z)-hexadecenoyl-CoA + malonyl-CoA + H(+) = 3-oxo-(11Z)-octadecenoyl-CoA + CO2 + CoA</text>
        <dbReference type="Rhea" id="RHEA:39675"/>
        <dbReference type="ChEBI" id="CHEBI:15378"/>
        <dbReference type="ChEBI" id="CHEBI:16526"/>
        <dbReference type="ChEBI" id="CHEBI:57287"/>
        <dbReference type="ChEBI" id="CHEBI:57384"/>
        <dbReference type="ChEBI" id="CHEBI:61540"/>
        <dbReference type="ChEBI" id="CHEBI:76555"/>
    </reaction>
    <physiologicalReaction direction="left-to-right" evidence="1">
        <dbReference type="Rhea" id="RHEA:39676"/>
    </physiologicalReaction>
</comment>
<comment type="catalytic activity">
    <reaction evidence="4">
        <text>(9Z)-octadecenoyl-CoA + malonyl-CoA + H(+) = 3-oxo-(11Z)-eicosenoyl-CoA + CO2 + CoA</text>
        <dbReference type="Rhea" id="RHEA:36511"/>
        <dbReference type="ChEBI" id="CHEBI:15378"/>
        <dbReference type="ChEBI" id="CHEBI:16526"/>
        <dbReference type="ChEBI" id="CHEBI:57287"/>
        <dbReference type="ChEBI" id="CHEBI:57384"/>
        <dbReference type="ChEBI" id="CHEBI:57387"/>
        <dbReference type="ChEBI" id="CHEBI:74011"/>
    </reaction>
    <physiologicalReaction direction="left-to-right" evidence="4">
        <dbReference type="Rhea" id="RHEA:36512"/>
    </physiologicalReaction>
</comment>
<comment type="catalytic activity">
    <reaction evidence="1">
        <text>(11Z)-octadecenoyl-CoA + malonyl-CoA + H(+) = 3-oxo-(13Z)-eicosenoyl-CoA + CO2 + CoA</text>
        <dbReference type="Rhea" id="RHEA:39679"/>
        <dbReference type="ChEBI" id="CHEBI:15378"/>
        <dbReference type="ChEBI" id="CHEBI:16526"/>
        <dbReference type="ChEBI" id="CHEBI:57287"/>
        <dbReference type="ChEBI" id="CHEBI:57384"/>
        <dbReference type="ChEBI" id="CHEBI:75121"/>
        <dbReference type="ChEBI" id="CHEBI:76559"/>
    </reaction>
    <physiologicalReaction direction="left-to-right" evidence="1">
        <dbReference type="Rhea" id="RHEA:39680"/>
    </physiologicalReaction>
</comment>
<comment type="catalytic activity">
    <reaction evidence="4">
        <text>(9Z,12Z)-octadecadienoyl-CoA + malonyl-CoA + H(+) = (11Z,14Z)-3-oxoicosa-11,14-dienoyl-CoA + CO2 + CoA</text>
        <dbReference type="Rhea" id="RHEA:36503"/>
        <dbReference type="ChEBI" id="CHEBI:15378"/>
        <dbReference type="ChEBI" id="CHEBI:16526"/>
        <dbReference type="ChEBI" id="CHEBI:57287"/>
        <dbReference type="ChEBI" id="CHEBI:57383"/>
        <dbReference type="ChEBI" id="CHEBI:57384"/>
        <dbReference type="ChEBI" id="CHEBI:74012"/>
    </reaction>
    <physiologicalReaction direction="left-to-right" evidence="4">
        <dbReference type="Rhea" id="RHEA:36504"/>
    </physiologicalReaction>
</comment>
<comment type="catalytic activity">
    <reaction evidence="1">
        <text>(6Z,9Z,12Z,15Z)-octadecatetraenoyl-CoA + malonyl-CoA + H(+) = (8Z,11Z,14Z,17Z)-3-oxoicosatetraenoyl-CoA + CO2 + CoA</text>
        <dbReference type="Rhea" id="RHEA:35391"/>
        <dbReference type="ChEBI" id="CHEBI:15378"/>
        <dbReference type="ChEBI" id="CHEBI:16526"/>
        <dbReference type="ChEBI" id="CHEBI:57287"/>
        <dbReference type="ChEBI" id="CHEBI:57384"/>
        <dbReference type="ChEBI" id="CHEBI:71489"/>
        <dbReference type="ChEBI" id="CHEBI:71491"/>
    </reaction>
    <physiologicalReaction direction="left-to-right" evidence="1">
        <dbReference type="Rhea" id="RHEA:35392"/>
    </physiologicalReaction>
</comment>
<comment type="catalytic activity">
    <reaction evidence="1">
        <text>(5Z,8Z,11Z,14Z)-eicosatetraenoyl-CoA + malonyl-CoA + H(+) = (7Z,10Z,13Z,16Z)-3-oxodocosatetraenoyl-CoA + CO2 + CoA</text>
        <dbReference type="Rhea" id="RHEA:36475"/>
        <dbReference type="ChEBI" id="CHEBI:15378"/>
        <dbReference type="ChEBI" id="CHEBI:16526"/>
        <dbReference type="ChEBI" id="CHEBI:57287"/>
        <dbReference type="ChEBI" id="CHEBI:57368"/>
        <dbReference type="ChEBI" id="CHEBI:57384"/>
        <dbReference type="ChEBI" id="CHEBI:73852"/>
    </reaction>
    <physiologicalReaction direction="left-to-right" evidence="1">
        <dbReference type="Rhea" id="RHEA:36476"/>
    </physiologicalReaction>
</comment>
<comment type="catalytic activity">
    <reaction evidence="1">
        <text>(5Z,8Z,11Z,14Z,17Z)-eicosapentaenoyl-CoA + malonyl-CoA + H(+) = 3-oxo-(7Z,10Z,13Z,16Z,19Z)-docosapentaenoyl-CoA + CO2 + CoA</text>
        <dbReference type="Rhea" id="RHEA:36483"/>
        <dbReference type="ChEBI" id="CHEBI:15378"/>
        <dbReference type="ChEBI" id="CHEBI:16526"/>
        <dbReference type="ChEBI" id="CHEBI:57287"/>
        <dbReference type="ChEBI" id="CHEBI:57384"/>
        <dbReference type="ChEBI" id="CHEBI:73862"/>
        <dbReference type="ChEBI" id="CHEBI:73863"/>
    </reaction>
</comment>
<comment type="pathway">
    <text evidence="2">Lipid metabolism; polyunsaturated fatty acid biosynthesis.</text>
</comment>
<comment type="subunit">
    <text evidence="1">Interacts with TECR.</text>
</comment>
<comment type="subcellular location">
    <subcellularLocation>
        <location evidence="2">Endoplasmic reticulum membrane</location>
        <topology evidence="2">Multi-pass membrane protein</topology>
    </subcellularLocation>
    <subcellularLocation>
        <location evidence="2">Cell projection</location>
        <location evidence="2">Dendrite</location>
    </subcellularLocation>
    <text evidence="2">In Purkinje cells, the protein localizes to the soma and proximal portion of the dendritic tree.</text>
</comment>
<comment type="similarity">
    <text evidence="2">Belongs to the ELO family. ELOVL5 subfamily.</text>
</comment>
<organism>
    <name type="scientific">Mus musculus</name>
    <name type="common">Mouse</name>
    <dbReference type="NCBI Taxonomy" id="10090"/>
    <lineage>
        <taxon>Eukaryota</taxon>
        <taxon>Metazoa</taxon>
        <taxon>Chordata</taxon>
        <taxon>Craniata</taxon>
        <taxon>Vertebrata</taxon>
        <taxon>Euteleostomi</taxon>
        <taxon>Mammalia</taxon>
        <taxon>Eutheria</taxon>
        <taxon>Euarchontoglires</taxon>
        <taxon>Glires</taxon>
        <taxon>Rodentia</taxon>
        <taxon>Myomorpha</taxon>
        <taxon>Muroidea</taxon>
        <taxon>Muridae</taxon>
        <taxon>Murinae</taxon>
        <taxon>Mus</taxon>
        <taxon>Mus</taxon>
    </lineage>
</organism>
<protein>
    <recommendedName>
        <fullName evidence="2">Very long chain fatty acid elongase 5</fullName>
        <ecNumber evidence="2 4">2.3.1.199</ecNumber>
    </recommendedName>
    <alternativeName>
        <fullName evidence="2">3-keto acyl-CoA synthase Elovl5</fullName>
    </alternativeName>
    <alternativeName>
        <fullName evidence="2">ELOVL fatty acid elongase 5</fullName>
        <shortName evidence="2">ELOVL FA elongase 5</shortName>
    </alternativeName>
    <alternativeName>
        <fullName evidence="2">Elongation of very long chain fatty acids protein 5</fullName>
    </alternativeName>
    <alternativeName>
        <fullName evidence="2">Very long chain 3-ketoacyl-CoA synthase 5</fullName>
    </alternativeName>
    <alternativeName>
        <fullName evidence="2">Very long chain 3-oxoacyl-CoA synthase 5</fullName>
    </alternativeName>
</protein>
<dbReference type="EC" id="2.3.1.199" evidence="2 4"/>
<dbReference type="EMBL" id="AK028761">
    <property type="protein sequence ID" value="BAC26105.1"/>
    <property type="molecule type" value="mRNA"/>
</dbReference>
<dbReference type="EMBL" id="AK045274">
    <property type="protein sequence ID" value="BAC32290.1"/>
    <property type="molecule type" value="mRNA"/>
</dbReference>
<dbReference type="EMBL" id="AK051580">
    <property type="protein sequence ID" value="BAC34682.1"/>
    <property type="molecule type" value="mRNA"/>
</dbReference>
<dbReference type="EMBL" id="AK085663">
    <property type="protein sequence ID" value="BAC39499.1"/>
    <property type="molecule type" value="mRNA"/>
</dbReference>
<dbReference type="EMBL" id="AK085696">
    <property type="protein sequence ID" value="BAC39509.1"/>
    <property type="molecule type" value="mRNA"/>
</dbReference>
<dbReference type="EMBL" id="AK088153">
    <property type="protein sequence ID" value="BAC40176.1"/>
    <property type="molecule type" value="mRNA"/>
</dbReference>
<dbReference type="EMBL" id="AK162451">
    <property type="protein sequence ID" value="BAE36925.1"/>
    <property type="molecule type" value="mRNA"/>
</dbReference>
<dbReference type="EMBL" id="AK168987">
    <property type="protein sequence ID" value="BAE40787.1"/>
    <property type="molecule type" value="mRNA"/>
</dbReference>
<dbReference type="EMBL" id="BC022911">
    <property type="protein sequence ID" value="AAH22911.1"/>
    <property type="molecule type" value="mRNA"/>
</dbReference>
<dbReference type="CCDS" id="CCDS23355.1"/>
<dbReference type="RefSeq" id="NP_599016.2">
    <property type="nucleotide sequence ID" value="NM_134255.3"/>
</dbReference>
<dbReference type="RefSeq" id="XP_006511463.1">
    <property type="nucleotide sequence ID" value="XM_006511400.1"/>
</dbReference>
<dbReference type="SMR" id="Q8BHI7"/>
<dbReference type="BioGRID" id="213059">
    <property type="interactions" value="4"/>
</dbReference>
<dbReference type="FunCoup" id="Q8BHI7">
    <property type="interactions" value="440"/>
</dbReference>
<dbReference type="STRING" id="10090.ENSMUSP00000034904"/>
<dbReference type="SwissLipids" id="SLP:000000811"/>
<dbReference type="iPTMnet" id="Q8BHI7"/>
<dbReference type="PhosphoSitePlus" id="Q8BHI7"/>
<dbReference type="SwissPalm" id="Q8BHI7"/>
<dbReference type="jPOST" id="Q8BHI7"/>
<dbReference type="PaxDb" id="10090-ENSMUSP00000034904"/>
<dbReference type="PeptideAtlas" id="Q8BHI7"/>
<dbReference type="ProteomicsDB" id="277822"/>
<dbReference type="Pumba" id="Q8BHI7"/>
<dbReference type="Antibodypedia" id="4471">
    <property type="antibodies" value="358 antibodies from 28 providers"/>
</dbReference>
<dbReference type="DNASU" id="68801"/>
<dbReference type="Ensembl" id="ENSMUST00000034904.14">
    <property type="protein sequence ID" value="ENSMUSP00000034904.8"/>
    <property type="gene ID" value="ENSMUSG00000032349.14"/>
</dbReference>
<dbReference type="GeneID" id="68801"/>
<dbReference type="KEGG" id="mmu:68801"/>
<dbReference type="UCSC" id="uc009qtn.2">
    <property type="organism name" value="mouse"/>
</dbReference>
<dbReference type="AGR" id="MGI:1916051"/>
<dbReference type="CTD" id="60481"/>
<dbReference type="MGI" id="MGI:1916051">
    <property type="gene designation" value="Elovl5"/>
</dbReference>
<dbReference type="VEuPathDB" id="HostDB:ENSMUSG00000032349"/>
<dbReference type="eggNOG" id="KOG3071">
    <property type="taxonomic scope" value="Eukaryota"/>
</dbReference>
<dbReference type="GeneTree" id="ENSGT01050000244838"/>
<dbReference type="InParanoid" id="Q8BHI7"/>
<dbReference type="OMA" id="CRFPMGW"/>
<dbReference type="OrthoDB" id="434092at2759"/>
<dbReference type="PhylomeDB" id="Q8BHI7"/>
<dbReference type="TreeFam" id="TF323454"/>
<dbReference type="Reactome" id="R-MMU-2046105">
    <property type="pathway name" value="Linoleic acid (LA) metabolism"/>
</dbReference>
<dbReference type="Reactome" id="R-MMU-2046106">
    <property type="pathway name" value="alpha-linolenic acid (ALA) metabolism"/>
</dbReference>
<dbReference type="Reactome" id="R-MMU-75876">
    <property type="pathway name" value="Synthesis of very long-chain fatty acyl-CoAs"/>
</dbReference>
<dbReference type="UniPathway" id="UPA00658"/>
<dbReference type="BioGRID-ORCS" id="68801">
    <property type="hits" value="4 hits in 78 CRISPR screens"/>
</dbReference>
<dbReference type="ChiTaRS" id="Elovl5">
    <property type="organism name" value="mouse"/>
</dbReference>
<dbReference type="PRO" id="PR:Q8BHI7"/>
<dbReference type="Proteomes" id="UP000000589">
    <property type="component" value="Chromosome 9"/>
</dbReference>
<dbReference type="RNAct" id="Q8BHI7">
    <property type="molecule type" value="protein"/>
</dbReference>
<dbReference type="Bgee" id="ENSMUSG00000032349">
    <property type="expression patterns" value="Expressed in vestibular membrane of cochlear duct and 265 other cell types or tissues"/>
</dbReference>
<dbReference type="ExpressionAtlas" id="Q8BHI7">
    <property type="expression patterns" value="baseline and differential"/>
</dbReference>
<dbReference type="GO" id="GO:0030425">
    <property type="term" value="C:dendrite"/>
    <property type="evidence" value="ECO:0007669"/>
    <property type="project" value="UniProtKB-SubCell"/>
</dbReference>
<dbReference type="GO" id="GO:0097447">
    <property type="term" value="C:dendritic tree"/>
    <property type="evidence" value="ECO:0000250"/>
    <property type="project" value="UniProtKB"/>
</dbReference>
<dbReference type="GO" id="GO:0005789">
    <property type="term" value="C:endoplasmic reticulum membrane"/>
    <property type="evidence" value="ECO:0000314"/>
    <property type="project" value="MGI"/>
</dbReference>
<dbReference type="GO" id="GO:0043025">
    <property type="term" value="C:neuronal cell body"/>
    <property type="evidence" value="ECO:0000250"/>
    <property type="project" value="UniProtKB"/>
</dbReference>
<dbReference type="GO" id="GO:0009922">
    <property type="term" value="F:fatty acid elongase activity"/>
    <property type="evidence" value="ECO:0000315"/>
    <property type="project" value="MGI"/>
</dbReference>
<dbReference type="GO" id="GO:0036109">
    <property type="term" value="P:alpha-linolenic acid metabolic process"/>
    <property type="evidence" value="ECO:0000315"/>
    <property type="project" value="MGI"/>
</dbReference>
<dbReference type="GO" id="GO:0006633">
    <property type="term" value="P:fatty acid biosynthetic process"/>
    <property type="evidence" value="ECO:0000315"/>
    <property type="project" value="MGI"/>
</dbReference>
<dbReference type="GO" id="GO:1901570">
    <property type="term" value="P:fatty acid derivative biosynthetic process"/>
    <property type="evidence" value="ECO:0000315"/>
    <property type="project" value="MGI"/>
</dbReference>
<dbReference type="GO" id="GO:0034625">
    <property type="term" value="P:fatty acid elongation, monounsaturated fatty acid"/>
    <property type="evidence" value="ECO:0000250"/>
    <property type="project" value="UniProtKB"/>
</dbReference>
<dbReference type="GO" id="GO:0034626">
    <property type="term" value="P:fatty acid elongation, polyunsaturated fatty acid"/>
    <property type="evidence" value="ECO:0000250"/>
    <property type="project" value="UniProtKB"/>
</dbReference>
<dbReference type="GO" id="GO:0019367">
    <property type="term" value="P:fatty acid elongation, saturated fatty acid"/>
    <property type="evidence" value="ECO:0007669"/>
    <property type="project" value="InterPro"/>
</dbReference>
<dbReference type="GO" id="GO:0043651">
    <property type="term" value="P:linoleic acid metabolic process"/>
    <property type="evidence" value="ECO:0000315"/>
    <property type="project" value="MGI"/>
</dbReference>
<dbReference type="GO" id="GO:0042759">
    <property type="term" value="P:long-chain fatty acid biosynthetic process"/>
    <property type="evidence" value="ECO:0000315"/>
    <property type="project" value="MGI"/>
</dbReference>
<dbReference type="GO" id="GO:0035338">
    <property type="term" value="P:long-chain fatty-acyl-CoA biosynthetic process"/>
    <property type="evidence" value="ECO:0007669"/>
    <property type="project" value="UniProtKB-UniRule"/>
</dbReference>
<dbReference type="GO" id="GO:0045723">
    <property type="term" value="P:positive regulation of fatty acid biosynthetic process"/>
    <property type="evidence" value="ECO:0007669"/>
    <property type="project" value="Ensembl"/>
</dbReference>
<dbReference type="GO" id="GO:0006636">
    <property type="term" value="P:unsaturated fatty acid biosynthetic process"/>
    <property type="evidence" value="ECO:0000315"/>
    <property type="project" value="MGI"/>
</dbReference>
<dbReference type="GO" id="GO:0042761">
    <property type="term" value="P:very long-chain fatty acid biosynthetic process"/>
    <property type="evidence" value="ECO:0000250"/>
    <property type="project" value="UniProtKB"/>
</dbReference>
<dbReference type="HAMAP" id="MF_03205">
    <property type="entry name" value="VLCF_elongase_5"/>
    <property type="match status" value="1"/>
</dbReference>
<dbReference type="InterPro" id="IPR002076">
    <property type="entry name" value="ELO_fam"/>
</dbReference>
<dbReference type="InterPro" id="IPR033677">
    <property type="entry name" value="ELOVL5"/>
</dbReference>
<dbReference type="PANTHER" id="PTHR11157:SF18">
    <property type="entry name" value="ELONGATION OF VERY LONG CHAIN FATTY ACIDS PROTEIN 5"/>
    <property type="match status" value="1"/>
</dbReference>
<dbReference type="PANTHER" id="PTHR11157">
    <property type="entry name" value="FATTY ACID ACYL TRANSFERASE-RELATED"/>
    <property type="match status" value="1"/>
</dbReference>
<dbReference type="Pfam" id="PF01151">
    <property type="entry name" value="ELO"/>
    <property type="match status" value="1"/>
</dbReference>
<reference key="1">
    <citation type="journal article" date="2005" name="Science">
        <title>The transcriptional landscape of the mammalian genome.</title>
        <authorList>
            <person name="Carninci P."/>
            <person name="Kasukawa T."/>
            <person name="Katayama S."/>
            <person name="Gough J."/>
            <person name="Frith M.C."/>
            <person name="Maeda N."/>
            <person name="Oyama R."/>
            <person name="Ravasi T."/>
            <person name="Lenhard B."/>
            <person name="Wells C."/>
            <person name="Kodzius R."/>
            <person name="Shimokawa K."/>
            <person name="Bajic V.B."/>
            <person name="Brenner S.E."/>
            <person name="Batalov S."/>
            <person name="Forrest A.R."/>
            <person name="Zavolan M."/>
            <person name="Davis M.J."/>
            <person name="Wilming L.G."/>
            <person name="Aidinis V."/>
            <person name="Allen J.E."/>
            <person name="Ambesi-Impiombato A."/>
            <person name="Apweiler R."/>
            <person name="Aturaliya R.N."/>
            <person name="Bailey T.L."/>
            <person name="Bansal M."/>
            <person name="Baxter L."/>
            <person name="Beisel K.W."/>
            <person name="Bersano T."/>
            <person name="Bono H."/>
            <person name="Chalk A.M."/>
            <person name="Chiu K.P."/>
            <person name="Choudhary V."/>
            <person name="Christoffels A."/>
            <person name="Clutterbuck D.R."/>
            <person name="Crowe M.L."/>
            <person name="Dalla E."/>
            <person name="Dalrymple B.P."/>
            <person name="de Bono B."/>
            <person name="Della Gatta G."/>
            <person name="di Bernardo D."/>
            <person name="Down T."/>
            <person name="Engstrom P."/>
            <person name="Fagiolini M."/>
            <person name="Faulkner G."/>
            <person name="Fletcher C.F."/>
            <person name="Fukushima T."/>
            <person name="Furuno M."/>
            <person name="Futaki S."/>
            <person name="Gariboldi M."/>
            <person name="Georgii-Hemming P."/>
            <person name="Gingeras T.R."/>
            <person name="Gojobori T."/>
            <person name="Green R.E."/>
            <person name="Gustincich S."/>
            <person name="Harbers M."/>
            <person name="Hayashi Y."/>
            <person name="Hensch T.K."/>
            <person name="Hirokawa N."/>
            <person name="Hill D."/>
            <person name="Huminiecki L."/>
            <person name="Iacono M."/>
            <person name="Ikeo K."/>
            <person name="Iwama A."/>
            <person name="Ishikawa T."/>
            <person name="Jakt M."/>
            <person name="Kanapin A."/>
            <person name="Katoh M."/>
            <person name="Kawasawa Y."/>
            <person name="Kelso J."/>
            <person name="Kitamura H."/>
            <person name="Kitano H."/>
            <person name="Kollias G."/>
            <person name="Krishnan S.P."/>
            <person name="Kruger A."/>
            <person name="Kummerfeld S.K."/>
            <person name="Kurochkin I.V."/>
            <person name="Lareau L.F."/>
            <person name="Lazarevic D."/>
            <person name="Lipovich L."/>
            <person name="Liu J."/>
            <person name="Liuni S."/>
            <person name="McWilliam S."/>
            <person name="Madan Babu M."/>
            <person name="Madera M."/>
            <person name="Marchionni L."/>
            <person name="Matsuda H."/>
            <person name="Matsuzawa S."/>
            <person name="Miki H."/>
            <person name="Mignone F."/>
            <person name="Miyake S."/>
            <person name="Morris K."/>
            <person name="Mottagui-Tabar S."/>
            <person name="Mulder N."/>
            <person name="Nakano N."/>
            <person name="Nakauchi H."/>
            <person name="Ng P."/>
            <person name="Nilsson R."/>
            <person name="Nishiguchi S."/>
            <person name="Nishikawa S."/>
            <person name="Nori F."/>
            <person name="Ohara O."/>
            <person name="Okazaki Y."/>
            <person name="Orlando V."/>
            <person name="Pang K.C."/>
            <person name="Pavan W.J."/>
            <person name="Pavesi G."/>
            <person name="Pesole G."/>
            <person name="Petrovsky N."/>
            <person name="Piazza S."/>
            <person name="Reed J."/>
            <person name="Reid J.F."/>
            <person name="Ring B.Z."/>
            <person name="Ringwald M."/>
            <person name="Rost B."/>
            <person name="Ruan Y."/>
            <person name="Salzberg S.L."/>
            <person name="Sandelin A."/>
            <person name="Schneider C."/>
            <person name="Schoenbach C."/>
            <person name="Sekiguchi K."/>
            <person name="Semple C.A."/>
            <person name="Seno S."/>
            <person name="Sessa L."/>
            <person name="Sheng Y."/>
            <person name="Shibata Y."/>
            <person name="Shimada H."/>
            <person name="Shimada K."/>
            <person name="Silva D."/>
            <person name="Sinclair B."/>
            <person name="Sperling S."/>
            <person name="Stupka E."/>
            <person name="Sugiura K."/>
            <person name="Sultana R."/>
            <person name="Takenaka Y."/>
            <person name="Taki K."/>
            <person name="Tammoja K."/>
            <person name="Tan S.L."/>
            <person name="Tang S."/>
            <person name="Taylor M.S."/>
            <person name="Tegner J."/>
            <person name="Teichmann S.A."/>
            <person name="Ueda H.R."/>
            <person name="van Nimwegen E."/>
            <person name="Verardo R."/>
            <person name="Wei C.L."/>
            <person name="Yagi K."/>
            <person name="Yamanishi H."/>
            <person name="Zabarovsky E."/>
            <person name="Zhu S."/>
            <person name="Zimmer A."/>
            <person name="Hide W."/>
            <person name="Bult C."/>
            <person name="Grimmond S.M."/>
            <person name="Teasdale R.D."/>
            <person name="Liu E.T."/>
            <person name="Brusic V."/>
            <person name="Quackenbush J."/>
            <person name="Wahlestedt C."/>
            <person name="Mattick J.S."/>
            <person name="Hume D.A."/>
            <person name="Kai C."/>
            <person name="Sasaki D."/>
            <person name="Tomaru Y."/>
            <person name="Fukuda S."/>
            <person name="Kanamori-Katayama M."/>
            <person name="Suzuki M."/>
            <person name="Aoki J."/>
            <person name="Arakawa T."/>
            <person name="Iida J."/>
            <person name="Imamura K."/>
            <person name="Itoh M."/>
            <person name="Kato T."/>
            <person name="Kawaji H."/>
            <person name="Kawagashira N."/>
            <person name="Kawashima T."/>
            <person name="Kojima M."/>
            <person name="Kondo S."/>
            <person name="Konno H."/>
            <person name="Nakano K."/>
            <person name="Ninomiya N."/>
            <person name="Nishio T."/>
            <person name="Okada M."/>
            <person name="Plessy C."/>
            <person name="Shibata K."/>
            <person name="Shiraki T."/>
            <person name="Suzuki S."/>
            <person name="Tagami M."/>
            <person name="Waki K."/>
            <person name="Watahiki A."/>
            <person name="Okamura-Oho Y."/>
            <person name="Suzuki H."/>
            <person name="Kawai J."/>
            <person name="Hayashizaki Y."/>
        </authorList>
    </citation>
    <scope>NUCLEOTIDE SEQUENCE [LARGE SCALE MRNA]</scope>
    <source>
        <strain>C57BL/6J</strain>
        <tissue>Embryo</tissue>
        <tissue>Embryoid bodies</tissue>
        <tissue>Kidney</tissue>
        <tissue>Mammary gland</tissue>
        <tissue>Skin</tissue>
        <tissue>Spinal ganglion</tissue>
    </source>
</reference>
<reference key="2">
    <citation type="journal article" date="2004" name="Genome Res.">
        <title>The status, quality, and expansion of the NIH full-length cDNA project: the Mammalian Gene Collection (MGC).</title>
        <authorList>
            <consortium name="The MGC Project Team"/>
        </authorList>
    </citation>
    <scope>NUCLEOTIDE SEQUENCE [LARGE SCALE MRNA]</scope>
    <source>
        <strain>FVB/N</strain>
        <tissue>Mammary tumor</tissue>
    </source>
</reference>
<reference key="3">
    <citation type="journal article" date="2007" name="Proc. Natl. Acad. Sci. U.S.A.">
        <title>Large-scale phosphorylation analysis of mouse liver.</title>
        <authorList>
            <person name="Villen J."/>
            <person name="Beausoleil S.A."/>
            <person name="Gerber S.A."/>
            <person name="Gygi S.P."/>
        </authorList>
    </citation>
    <scope>IDENTIFICATION BY MASS SPECTROMETRY [LARGE SCALE ANALYSIS]</scope>
    <source>
        <tissue>Liver</tissue>
    </source>
</reference>
<reference key="4">
    <citation type="journal article" date="2014" name="Biochim. Biophys. Acta">
        <title>Identification of genes and pathways involved in the synthesis of Mead acid (20:3n-9), an indicator of essential fatty acid deficiency.</title>
        <authorList>
            <person name="Ichi I."/>
            <person name="Kono N."/>
            <person name="Arita Y."/>
            <person name="Haga S."/>
            <person name="Arisawa K."/>
            <person name="Yamano M."/>
            <person name="Nagase M."/>
            <person name="Fujiwara Y."/>
            <person name="Arai H."/>
        </authorList>
    </citation>
    <scope>FUNCTION</scope>
    <scope>CATALYTIC ACTIVITY</scope>
</reference>